<sequence>MKRELLKLSILEAHRCLKNKDFSARELTEAYIGAVEQDTLNAFVTTTPELALAAADRTDGLLQRGEPIHPMSGIPVGVKDLFCTKGVRTTACSNILKNFVPTYESTVSQKLWDSGAVMLGKLNMDEFAMGSSNTYSCFGPVKNPWKGTEGKDLTPGGSSGGSSAAVAGLLCAGALGSDTGGSVRQPAALCGVVGAKPTYGRCSRWGMIAYASSLDQAGVLARTVEDAAVMLNAICGYDQKDSTSSQEAVPDFLGGISRDVRGVRIGIPKEYELPKNRGDIAAMWDQNIKHLLDCGAEIVEISLPHTTYALPVYYILASSEASSNLARYDGIRYGTRVEGETIDEMYELTRSLNFGEEVKRRMLIGAYTLSSGYRRAYYDKAQRVRCLVIRDFEEAFKKVDCILALTTPVEATGIEEPLSAMDRYFTDVFTVPASLAGLPAISVPAGLSERKLPMALQVIGNYHDECGMLNLAAVIYEHSGGVLQHLHGF</sequence>
<organism>
    <name type="scientific">Anaplasma marginale (strain Florida)</name>
    <dbReference type="NCBI Taxonomy" id="320483"/>
    <lineage>
        <taxon>Bacteria</taxon>
        <taxon>Pseudomonadati</taxon>
        <taxon>Pseudomonadota</taxon>
        <taxon>Alphaproteobacteria</taxon>
        <taxon>Rickettsiales</taxon>
        <taxon>Anaplasmataceae</taxon>
        <taxon>Anaplasma</taxon>
    </lineage>
</organism>
<gene>
    <name evidence="1" type="primary">gatA</name>
    <name type="ordered locus">AMF_521</name>
</gene>
<reference key="1">
    <citation type="journal article" date="2009" name="BMC Genomics">
        <title>Conservation in the face of diversity: multistrain analysis of an intracellular bacterium.</title>
        <authorList>
            <person name="Dark M.J."/>
            <person name="Herndon D.R."/>
            <person name="Kappmeyer L.S."/>
            <person name="Gonzales M.P."/>
            <person name="Nordeen E."/>
            <person name="Palmer G.H."/>
            <person name="Knowles D.P. Jr."/>
            <person name="Brayton K.A."/>
        </authorList>
    </citation>
    <scope>NUCLEOTIDE SEQUENCE [LARGE SCALE GENOMIC DNA]</scope>
    <source>
        <strain>Florida</strain>
    </source>
</reference>
<keyword id="KW-0067">ATP-binding</keyword>
<keyword id="KW-0436">Ligase</keyword>
<keyword id="KW-0547">Nucleotide-binding</keyword>
<keyword id="KW-0648">Protein biosynthesis</keyword>
<keyword id="KW-1185">Reference proteome</keyword>
<protein>
    <recommendedName>
        <fullName evidence="1">Glutamyl-tRNA(Gln) amidotransferase subunit A</fullName>
        <shortName evidence="1">Glu-ADT subunit A</shortName>
        <ecNumber evidence="1">6.3.5.7</ecNumber>
    </recommendedName>
</protein>
<dbReference type="EC" id="6.3.5.7" evidence="1"/>
<dbReference type="EMBL" id="CP001079">
    <property type="protein sequence ID" value="ACM49374.1"/>
    <property type="molecule type" value="Genomic_DNA"/>
</dbReference>
<dbReference type="RefSeq" id="WP_010264692.1">
    <property type="nucleotide sequence ID" value="NC_012026.1"/>
</dbReference>
<dbReference type="SMR" id="B9KIR2"/>
<dbReference type="STRING" id="320483.AMF_521"/>
<dbReference type="GeneID" id="7398138"/>
<dbReference type="KEGG" id="amf:AMF_521"/>
<dbReference type="eggNOG" id="COG0154">
    <property type="taxonomic scope" value="Bacteria"/>
</dbReference>
<dbReference type="HOGENOM" id="CLU_009600_0_3_5"/>
<dbReference type="Proteomes" id="UP000007307">
    <property type="component" value="Chromosome"/>
</dbReference>
<dbReference type="GO" id="GO:0030956">
    <property type="term" value="C:glutamyl-tRNA(Gln) amidotransferase complex"/>
    <property type="evidence" value="ECO:0007669"/>
    <property type="project" value="InterPro"/>
</dbReference>
<dbReference type="GO" id="GO:0005524">
    <property type="term" value="F:ATP binding"/>
    <property type="evidence" value="ECO:0007669"/>
    <property type="project" value="UniProtKB-KW"/>
</dbReference>
<dbReference type="GO" id="GO:0050567">
    <property type="term" value="F:glutaminyl-tRNA synthase (glutamine-hydrolyzing) activity"/>
    <property type="evidence" value="ECO:0007669"/>
    <property type="project" value="UniProtKB-UniRule"/>
</dbReference>
<dbReference type="GO" id="GO:0006412">
    <property type="term" value="P:translation"/>
    <property type="evidence" value="ECO:0007669"/>
    <property type="project" value="UniProtKB-UniRule"/>
</dbReference>
<dbReference type="Gene3D" id="3.90.1300.10">
    <property type="entry name" value="Amidase signature (AS) domain"/>
    <property type="match status" value="1"/>
</dbReference>
<dbReference type="HAMAP" id="MF_00120">
    <property type="entry name" value="GatA"/>
    <property type="match status" value="1"/>
</dbReference>
<dbReference type="InterPro" id="IPR000120">
    <property type="entry name" value="Amidase"/>
</dbReference>
<dbReference type="InterPro" id="IPR020556">
    <property type="entry name" value="Amidase_CS"/>
</dbReference>
<dbReference type="InterPro" id="IPR023631">
    <property type="entry name" value="Amidase_dom"/>
</dbReference>
<dbReference type="InterPro" id="IPR036928">
    <property type="entry name" value="AS_sf"/>
</dbReference>
<dbReference type="InterPro" id="IPR004412">
    <property type="entry name" value="GatA"/>
</dbReference>
<dbReference type="NCBIfam" id="TIGR00132">
    <property type="entry name" value="gatA"/>
    <property type="match status" value="1"/>
</dbReference>
<dbReference type="PANTHER" id="PTHR11895:SF151">
    <property type="entry name" value="GLUTAMYL-TRNA(GLN) AMIDOTRANSFERASE SUBUNIT A"/>
    <property type="match status" value="1"/>
</dbReference>
<dbReference type="PANTHER" id="PTHR11895">
    <property type="entry name" value="TRANSAMIDASE"/>
    <property type="match status" value="1"/>
</dbReference>
<dbReference type="Pfam" id="PF01425">
    <property type="entry name" value="Amidase"/>
    <property type="match status" value="1"/>
</dbReference>
<dbReference type="SUPFAM" id="SSF75304">
    <property type="entry name" value="Amidase signature (AS) enzymes"/>
    <property type="match status" value="1"/>
</dbReference>
<dbReference type="PROSITE" id="PS00571">
    <property type="entry name" value="AMIDASES"/>
    <property type="match status" value="1"/>
</dbReference>
<name>GATA_ANAMF</name>
<evidence type="ECO:0000255" key="1">
    <source>
        <dbReference type="HAMAP-Rule" id="MF_00120"/>
    </source>
</evidence>
<comment type="function">
    <text evidence="1">Allows the formation of correctly charged Gln-tRNA(Gln) through the transamidation of misacylated Glu-tRNA(Gln) in organisms which lack glutaminyl-tRNA synthetase. The reaction takes place in the presence of glutamine and ATP through an activated gamma-phospho-Glu-tRNA(Gln).</text>
</comment>
<comment type="catalytic activity">
    <reaction evidence="1">
        <text>L-glutamyl-tRNA(Gln) + L-glutamine + ATP + H2O = L-glutaminyl-tRNA(Gln) + L-glutamate + ADP + phosphate + H(+)</text>
        <dbReference type="Rhea" id="RHEA:17521"/>
        <dbReference type="Rhea" id="RHEA-COMP:9681"/>
        <dbReference type="Rhea" id="RHEA-COMP:9684"/>
        <dbReference type="ChEBI" id="CHEBI:15377"/>
        <dbReference type="ChEBI" id="CHEBI:15378"/>
        <dbReference type="ChEBI" id="CHEBI:29985"/>
        <dbReference type="ChEBI" id="CHEBI:30616"/>
        <dbReference type="ChEBI" id="CHEBI:43474"/>
        <dbReference type="ChEBI" id="CHEBI:58359"/>
        <dbReference type="ChEBI" id="CHEBI:78520"/>
        <dbReference type="ChEBI" id="CHEBI:78521"/>
        <dbReference type="ChEBI" id="CHEBI:456216"/>
        <dbReference type="EC" id="6.3.5.7"/>
    </reaction>
</comment>
<comment type="subunit">
    <text evidence="1">Heterotrimer of A, B and C subunits.</text>
</comment>
<comment type="similarity">
    <text evidence="1">Belongs to the amidase family. GatA subfamily.</text>
</comment>
<proteinExistence type="inferred from homology"/>
<accession>B9KIR2</accession>
<feature type="chain" id="PRO_1000122462" description="Glutamyl-tRNA(Gln) amidotransferase subunit A">
    <location>
        <begin position="1"/>
        <end position="489"/>
    </location>
</feature>
<feature type="active site" description="Charge relay system" evidence="1">
    <location>
        <position position="79"/>
    </location>
</feature>
<feature type="active site" description="Charge relay system" evidence="1">
    <location>
        <position position="158"/>
    </location>
</feature>
<feature type="active site" description="Acyl-ester intermediate" evidence="1">
    <location>
        <position position="182"/>
    </location>
</feature>